<proteinExistence type="evidence at protein level"/>
<dbReference type="EC" id="3.1.26.5" evidence="1"/>
<dbReference type="EMBL" id="BA000001">
    <property type="protein sequence ID" value="BAA30999.1"/>
    <property type="molecule type" value="Genomic_DNA"/>
</dbReference>
<dbReference type="PIR" id="H71200">
    <property type="entry name" value="H71200"/>
</dbReference>
<dbReference type="RefSeq" id="WP_010885939.1">
    <property type="nucleotide sequence ID" value="NC_000961.1"/>
</dbReference>
<dbReference type="PDB" id="1V77">
    <property type="method" value="X-ray"/>
    <property type="resolution" value="1.80 A"/>
    <property type="chains" value="A=1-212"/>
</dbReference>
<dbReference type="PDB" id="2CZV">
    <property type="method" value="X-ray"/>
    <property type="resolution" value="2.00 A"/>
    <property type="chains" value="A/B=1-212"/>
</dbReference>
<dbReference type="PDBsum" id="1V77"/>
<dbReference type="PDBsum" id="2CZV"/>
<dbReference type="SMR" id="O59543"/>
<dbReference type="IntAct" id="O59543">
    <property type="interactions" value="1"/>
</dbReference>
<dbReference type="STRING" id="70601.gene:9378883"/>
<dbReference type="EnsemblBacteria" id="BAA30999">
    <property type="protein sequence ID" value="BAA30999"/>
    <property type="gene ID" value="BAA30999"/>
</dbReference>
<dbReference type="GeneID" id="1442721"/>
<dbReference type="KEGG" id="pho:PH1877"/>
<dbReference type="eggNOG" id="arCOG00307">
    <property type="taxonomic scope" value="Archaea"/>
</dbReference>
<dbReference type="OrthoDB" id="85765at2157"/>
<dbReference type="BRENDA" id="3.1.26.5">
    <property type="organism ID" value="5244"/>
</dbReference>
<dbReference type="EvolutionaryTrace" id="O59543"/>
<dbReference type="Proteomes" id="UP000000752">
    <property type="component" value="Chromosome"/>
</dbReference>
<dbReference type="GO" id="GO:0005737">
    <property type="term" value="C:cytoplasm"/>
    <property type="evidence" value="ECO:0007669"/>
    <property type="project" value="UniProtKB-SubCell"/>
</dbReference>
<dbReference type="GO" id="GO:0030677">
    <property type="term" value="C:ribonuclease P complex"/>
    <property type="evidence" value="ECO:0000314"/>
    <property type="project" value="UniProtKB"/>
</dbReference>
<dbReference type="GO" id="GO:0004526">
    <property type="term" value="F:ribonuclease P activity"/>
    <property type="evidence" value="ECO:0000314"/>
    <property type="project" value="UniProtKB"/>
</dbReference>
<dbReference type="GO" id="GO:0001682">
    <property type="term" value="P:tRNA 5'-leader removal"/>
    <property type="evidence" value="ECO:0000314"/>
    <property type="project" value="UniProtKB"/>
</dbReference>
<dbReference type="FunFam" id="3.20.20.140:FF:000270">
    <property type="entry name" value="Ribonuclease P protein component 3"/>
    <property type="match status" value="1"/>
</dbReference>
<dbReference type="Gene3D" id="3.20.20.140">
    <property type="entry name" value="Metal-dependent hydrolases"/>
    <property type="match status" value="1"/>
</dbReference>
<dbReference type="HAMAP" id="MF_00756">
    <property type="entry name" value="RNase_P_3"/>
    <property type="match status" value="1"/>
</dbReference>
<dbReference type="InterPro" id="IPR016195">
    <property type="entry name" value="Pol/histidinol_Pase-like"/>
</dbReference>
<dbReference type="InterPro" id="IPR023539">
    <property type="entry name" value="RNase_P_comp-3_arc"/>
</dbReference>
<dbReference type="InterPro" id="IPR002738">
    <property type="entry name" value="RNase_P_p30"/>
</dbReference>
<dbReference type="NCBIfam" id="NF003023">
    <property type="entry name" value="PRK03892.1"/>
    <property type="match status" value="1"/>
</dbReference>
<dbReference type="Pfam" id="PF01876">
    <property type="entry name" value="RNase_P_p30"/>
    <property type="match status" value="1"/>
</dbReference>
<dbReference type="SUPFAM" id="SSF89550">
    <property type="entry name" value="PHP domain-like"/>
    <property type="match status" value="1"/>
</dbReference>
<sequence>MVGGGGVKFIEMDIRDKEAYELAKEWFDEVVVSIKFNEEVDKEKLREARKEYGKVAILLSNPKPSLVRDTVQKFKSYLIYVESNDLRVIRYSIEKGVDAIISPWVNRKDPGIDHVLAKLMVKKNVALGFSLRPLLYSNPYERANLLRFMMKAWKLVEKYKVRRFLTSSAQEKWDVRYPRDLISLGVVIGMEIPQAKASISMYPEIILKRLKY</sequence>
<protein>
    <recommendedName>
        <fullName evidence="1">Ribonuclease P protein component 3</fullName>
        <shortName evidence="1">RNase P component 3</shortName>
        <ecNumber evidence="1">3.1.26.5</ecNumber>
    </recommendedName>
    <alternativeName>
        <fullName evidence="1">Rpp30</fullName>
    </alternativeName>
</protein>
<keyword id="KW-0002">3D-structure</keyword>
<keyword id="KW-0963">Cytoplasm</keyword>
<keyword id="KW-0255">Endonuclease</keyword>
<keyword id="KW-0378">Hydrolase</keyword>
<keyword id="KW-0540">Nuclease</keyword>
<keyword id="KW-0819">tRNA processing</keyword>
<reference key="1">
    <citation type="journal article" date="1998" name="DNA Res.">
        <title>Complete sequence and gene organization of the genome of a hyper-thermophilic archaebacterium, Pyrococcus horikoshii OT3.</title>
        <authorList>
            <person name="Kawarabayasi Y."/>
            <person name="Sawada M."/>
            <person name="Horikawa H."/>
            <person name="Haikawa Y."/>
            <person name="Hino Y."/>
            <person name="Yamamoto S."/>
            <person name="Sekine M."/>
            <person name="Baba S."/>
            <person name="Kosugi H."/>
            <person name="Hosoyama A."/>
            <person name="Nagai Y."/>
            <person name="Sakai M."/>
            <person name="Ogura K."/>
            <person name="Otsuka R."/>
            <person name="Nakazawa H."/>
            <person name="Takamiya M."/>
            <person name="Ohfuku Y."/>
            <person name="Funahashi T."/>
            <person name="Tanaka T."/>
            <person name="Kudoh Y."/>
            <person name="Yamazaki J."/>
            <person name="Kushida N."/>
            <person name="Oguchi A."/>
            <person name="Aoki K."/>
            <person name="Yoshizawa T."/>
            <person name="Nakamura Y."/>
            <person name="Robb F.T."/>
            <person name="Horikoshi K."/>
            <person name="Masuchi Y."/>
            <person name="Shizuya H."/>
            <person name="Kikuchi H."/>
        </authorList>
    </citation>
    <scope>NUCLEOTIDE SEQUENCE [LARGE SCALE GENOMIC DNA]</scope>
    <source>
        <strain>ATCC 700860 / DSM 12428 / JCM 9974 / NBRC 100139 / OT-3</strain>
    </source>
</reference>
<reference key="2">
    <citation type="journal article" date="2003" name="Biochem. Biophys. Res. Commun.">
        <title>Reconstitution of archaeal ribonuclease P from RNA and four protein components.</title>
        <authorList>
            <person name="Kouzuma Y."/>
            <person name="Mizoguchi M."/>
            <person name="Takagi H."/>
            <person name="Fukuhara H."/>
            <person name="Tsukamoto M."/>
            <person name="Numata T."/>
            <person name="Kimura M."/>
        </authorList>
    </citation>
    <scope>FUNCTION</scope>
    <scope>BIOPHYSICOCHEMICAL PROPERTIES</scope>
    <scope>SUBUNIT</scope>
    <scope>RNA-BINDING</scope>
    <source>
        <strain>ATCC 700860 / DSM 12428 / JCM 9974 / NBRC 100139 / OT-3</strain>
    </source>
</reference>
<reference key="3">
    <citation type="journal article" date="2006" name="Biochem. Biophys. Res. Commun.">
        <title>A fifth protein subunit Ph1496p elevates the optimum temperature for the ribonuclease P activity from Pyrococcus horikoshii OT3.</title>
        <authorList>
            <person name="Fukuhara H."/>
            <person name="Kifusa M."/>
            <person name="Watanabe M."/>
            <person name="Terada A."/>
            <person name="Honda T."/>
            <person name="Numata T."/>
            <person name="Kakuta Y."/>
            <person name="Kimura M."/>
        </authorList>
    </citation>
    <scope>FUNCTION</scope>
    <scope>BIOPHYSICOCHEMICAL PROPERTIES</scope>
    <scope>SUBUNIT</scope>
    <source>
        <strain>ATCC 700860 / DSM 12428 / JCM 9974 / NBRC 100139 / OT-3</strain>
    </source>
</reference>
<reference key="4">
    <citation type="journal article" date="2006" name="J. Biochem.">
        <title>Characterization of the archaeal ribonuclease P proteins from Pyrococcus horikoshii OT3.</title>
        <authorList>
            <person name="Terada A."/>
            <person name="Honda T."/>
            <person name="Fukuhara H."/>
            <person name="Hada K."/>
            <person name="Kimura M."/>
        </authorList>
    </citation>
    <scope>FUNCTION</scope>
    <scope>SUBUNIT</scope>
    <source>
        <strain>ATCC 700860 / DSM 12428 / JCM 9974 / NBRC 100139 / OT-3</strain>
    </source>
</reference>
<reference key="5">
    <citation type="journal article" date="2004" name="Biochem. Biophys. Res. Commun.">
        <title>Crystal structure of the ribonuclease P protein Ph1877p from hyperthermophilic archaeon Pyrococcus horikoshii OT3.</title>
        <authorList>
            <person name="Takagi H."/>
            <person name="Watanabe M."/>
            <person name="Kakuta Y."/>
            <person name="Kamachi R."/>
            <person name="Numata T."/>
            <person name="Tanaka I."/>
            <person name="Kimura M."/>
        </authorList>
    </citation>
    <scope>X-RAY CRYSTALLOGRAPHY (1.8 ANGSTROMS)</scope>
    <scope>MUTAGENESIS OF LYS-42; ARG-68; ARG-87; ARG-90; ASP-98; ARG-107; HIS-114; LYS-123; LYS-158; ARG-176; ASP-180 AND LYS-196</scope>
    <source>
        <strain>ATCC 700860 / DSM 12428 / JCM 9974 / NBRC 100139 / OT-3</strain>
    </source>
</reference>
<reference key="6">
    <citation type="journal article" date="2006" name="J. Mol. Biol.">
        <title>Crystal structure of protein Ph1481p in complex with protein Ph1877p of archaeal RNase P from Pyrococcus horikoshii OT3: implication of dimer formation of the holoenzyme.</title>
        <authorList>
            <person name="Kawano S."/>
            <person name="Nakashima T."/>
            <person name="Kakuta Y."/>
            <person name="Tanaka I."/>
            <person name="Kimura M."/>
        </authorList>
    </citation>
    <scope>X-RAY CRYSTALLOGRAPHY (2.0 ANGSTROMS) IN COMPLEX WITH RNP2</scope>
    <scope>SUBUNIT</scope>
    <source>
        <strain>ATCC 700860 / DSM 12428 / JCM 9974 / NBRC 100139 / OT-3</strain>
    </source>
</reference>
<comment type="function">
    <text evidence="1 2 5 6">Part of ribonuclease P, a protein complex that generates mature tRNA molecules by cleaving their 5'-ends. Not absolutely essential for activity in vitro, however it strongly stimulates activity. Binds RNase P RNA.</text>
</comment>
<comment type="catalytic activity">
    <reaction evidence="1">
        <text>Endonucleolytic cleavage of RNA, removing 5'-extranucleotides from tRNA precursor.</text>
        <dbReference type="EC" id="3.1.26.5"/>
    </reaction>
</comment>
<comment type="biophysicochemical properties">
    <temperatureDependence>
        <text evidence="2 5">Optimum temperature is 70 degrees Celsius.</text>
    </temperatureDependence>
</comment>
<comment type="subunit">
    <text evidence="2 4 5 6">Consists of a catalytic RNA component and at least 5 protein subunits. Forms a heterotetrameric subcomplex with Rnp2. Reconstituted enzyme missing individual protein subunits is suboptimally active, showing each subunit contributes to optimization of activity.</text>
</comment>
<comment type="interaction">
    <interactant intactId="EBI-2603192">
        <id>O59543</id>
    </interactant>
    <interactant intactId="EBI-2603177">
        <id>O59150</id>
        <label>rnp2</label>
    </interactant>
    <organismsDiffer>false</organismsDiffer>
    <experiments>2</experiments>
</comment>
<comment type="subcellular location">
    <subcellularLocation>
        <location evidence="1">Cytoplasm</location>
    </subcellularLocation>
</comment>
<comment type="similarity">
    <text evidence="1">Belongs to the eukaryotic/archaeal RNase P protein component 3 family.</text>
</comment>
<accession>O59543</accession>
<name>RNP3_PYRHO</name>
<gene>
    <name evidence="1" type="primary">rnp3</name>
    <name type="ordered locus">PH1877</name>
</gene>
<organism>
    <name type="scientific">Pyrococcus horikoshii (strain ATCC 700860 / DSM 12428 / JCM 9974 / NBRC 100139 / OT-3)</name>
    <dbReference type="NCBI Taxonomy" id="70601"/>
    <lineage>
        <taxon>Archaea</taxon>
        <taxon>Methanobacteriati</taxon>
        <taxon>Methanobacteriota</taxon>
        <taxon>Thermococci</taxon>
        <taxon>Thermococcales</taxon>
        <taxon>Thermococcaceae</taxon>
        <taxon>Pyrococcus</taxon>
    </lineage>
</organism>
<evidence type="ECO:0000255" key="1">
    <source>
        <dbReference type="HAMAP-Rule" id="MF_00756"/>
    </source>
</evidence>
<evidence type="ECO:0000269" key="2">
    <source>
    </source>
</evidence>
<evidence type="ECO:0000269" key="3">
    <source>
    </source>
</evidence>
<evidence type="ECO:0000269" key="4">
    <source>
    </source>
</evidence>
<evidence type="ECO:0000269" key="5">
    <source>
    </source>
</evidence>
<evidence type="ECO:0000269" key="6">
    <source>
    </source>
</evidence>
<evidence type="ECO:0007829" key="7">
    <source>
        <dbReference type="PDB" id="1V77"/>
    </source>
</evidence>
<evidence type="ECO:0007829" key="8">
    <source>
        <dbReference type="PDB" id="2CZV"/>
    </source>
</evidence>
<feature type="chain" id="PRO_0000140046" description="Ribonuclease P protein component 3">
    <location>
        <begin position="1"/>
        <end position="212"/>
    </location>
</feature>
<feature type="mutagenesis site" description="Fully reconstitutes RNase P activity." evidence="3">
    <original>K</original>
    <variation>A</variation>
    <location>
        <position position="42"/>
    </location>
</feature>
<feature type="mutagenesis site" description="75% reconstituted RNase P activity." evidence="3">
    <original>R</original>
    <variation>A</variation>
    <location>
        <position position="68"/>
    </location>
</feature>
<feature type="mutagenesis site" description="Fully reconstitutes RNase P activity." evidence="3">
    <original>R</original>
    <variation>A</variation>
    <location>
        <position position="87"/>
    </location>
</feature>
<feature type="mutagenesis site" description="45% reconstituted RNase P activity." evidence="3">
    <original>R</original>
    <variation>A</variation>
    <location>
        <position position="90"/>
    </location>
</feature>
<feature type="mutagenesis site" description="80% reconstituted RNase P activity." evidence="3">
    <original>D</original>
    <variation>A</variation>
    <location>
        <position position="98"/>
    </location>
</feature>
<feature type="mutagenesis site" description="45% reconstituted RNase P activity." evidence="3">
    <original>R</original>
    <variation>A</variation>
    <location>
        <position position="107"/>
    </location>
</feature>
<feature type="mutagenesis site" description="75% reconstituted RNase P activity." evidence="3">
    <original>H</original>
    <variation>A</variation>
    <location>
        <position position="114"/>
    </location>
</feature>
<feature type="mutagenesis site" description="45% reconstituted RNase P activity." evidence="3">
    <original>K</original>
    <variation>A</variation>
    <location>
        <position position="123"/>
    </location>
</feature>
<feature type="mutagenesis site" description="75% reconstituted RNase P activity." evidence="3">
    <original>K</original>
    <variation>A</variation>
    <location>
        <position position="158"/>
    </location>
</feature>
<feature type="mutagenesis site" description="45% reconstituted RNase P activity." evidence="3">
    <original>R</original>
    <variation>A</variation>
    <location>
        <position position="176"/>
    </location>
</feature>
<feature type="mutagenesis site" description="50% reconstituted RNase P activity." evidence="3">
    <original>D</original>
    <variation>A</variation>
    <location>
        <position position="180"/>
    </location>
</feature>
<feature type="mutagenesis site" description="45% reconstituted RNase P activity." evidence="3">
    <original>K</original>
    <variation>A</variation>
    <location>
        <position position="196"/>
    </location>
</feature>
<feature type="strand" evidence="8">
    <location>
        <begin position="4"/>
        <end position="6"/>
    </location>
</feature>
<feature type="strand" evidence="7">
    <location>
        <begin position="10"/>
        <end position="14"/>
    </location>
</feature>
<feature type="helix" evidence="7">
    <location>
        <begin position="17"/>
        <end position="26"/>
    </location>
</feature>
<feature type="strand" evidence="7">
    <location>
        <begin position="28"/>
        <end position="38"/>
    </location>
</feature>
<feature type="helix" evidence="7">
    <location>
        <begin position="42"/>
        <end position="52"/>
    </location>
</feature>
<feature type="strand" evidence="7">
    <location>
        <begin position="55"/>
        <end position="61"/>
    </location>
</feature>
<feature type="helix" evidence="7">
    <location>
        <begin position="64"/>
        <end position="73"/>
    </location>
</feature>
<feature type="strand" evidence="7">
    <location>
        <begin position="75"/>
        <end position="82"/>
    </location>
</feature>
<feature type="helix" evidence="7">
    <location>
        <begin position="86"/>
        <end position="94"/>
    </location>
</feature>
<feature type="strand" evidence="7">
    <location>
        <begin position="98"/>
        <end position="101"/>
    </location>
</feature>
<feature type="turn" evidence="7">
    <location>
        <begin position="103"/>
        <end position="106"/>
    </location>
</feature>
<feature type="strand" evidence="7">
    <location>
        <begin position="107"/>
        <end position="109"/>
    </location>
</feature>
<feature type="helix" evidence="7">
    <location>
        <begin position="114"/>
        <end position="123"/>
    </location>
</feature>
<feature type="strand" evidence="7">
    <location>
        <begin position="126"/>
        <end position="131"/>
    </location>
</feature>
<feature type="helix" evidence="7">
    <location>
        <begin position="132"/>
        <end position="136"/>
    </location>
</feature>
<feature type="helix" evidence="7">
    <location>
        <begin position="139"/>
        <end position="159"/>
    </location>
</feature>
<feature type="strand" evidence="7">
    <location>
        <begin position="163"/>
        <end position="166"/>
    </location>
</feature>
<feature type="helix" evidence="7">
    <location>
        <begin position="172"/>
        <end position="174"/>
    </location>
</feature>
<feature type="helix" evidence="7">
    <location>
        <begin position="178"/>
        <end position="187"/>
    </location>
</feature>
<feature type="helix" evidence="7">
    <location>
        <begin position="192"/>
        <end position="197"/>
    </location>
</feature>
<feature type="turn" evidence="7">
    <location>
        <begin position="198"/>
        <end position="200"/>
    </location>
</feature>
<feature type="helix" evidence="7">
    <location>
        <begin position="201"/>
        <end position="207"/>
    </location>
</feature>